<reference key="1">
    <citation type="journal article" date="2002" name="Proc. Natl. Acad. Sci. U.S.A.">
        <title>The genome sequence of the facultative intracellular pathogen Brucella melitensis.</title>
        <authorList>
            <person name="DelVecchio V.G."/>
            <person name="Kapatral V."/>
            <person name="Redkar R.J."/>
            <person name="Patra G."/>
            <person name="Mujer C."/>
            <person name="Los T."/>
            <person name="Ivanova N."/>
            <person name="Anderson I."/>
            <person name="Bhattacharyya A."/>
            <person name="Lykidis A."/>
            <person name="Reznik G."/>
            <person name="Jablonski L."/>
            <person name="Larsen N."/>
            <person name="D'Souza M."/>
            <person name="Bernal A."/>
            <person name="Mazur M."/>
            <person name="Goltsman E."/>
            <person name="Selkov E."/>
            <person name="Elzer P.H."/>
            <person name="Hagius S."/>
            <person name="O'Callaghan D."/>
            <person name="Letesson J.-J."/>
            <person name="Haselkorn R."/>
            <person name="Kyrpides N.C."/>
            <person name="Overbeek R."/>
        </authorList>
    </citation>
    <scope>NUCLEOTIDE SEQUENCE [LARGE SCALE GENOMIC DNA]</scope>
    <source>
        <strain>ATCC 23456 / CCUG 17765 / NCTC 10094 / 16M</strain>
    </source>
</reference>
<sequence>MTDLRHYDVIVSPVITEKSTMVSEHNQVVFNVARKATKPEIKAAVEALFGVKVTAVNTAVCKGKVKRFRGLVGRQSDVKKAIVTLAEGQSIDVSTGL</sequence>
<organism>
    <name type="scientific">Brucella melitensis biotype 1 (strain ATCC 23456 / CCUG 17765 / NCTC 10094 / 16M)</name>
    <dbReference type="NCBI Taxonomy" id="224914"/>
    <lineage>
        <taxon>Bacteria</taxon>
        <taxon>Pseudomonadati</taxon>
        <taxon>Pseudomonadota</taxon>
        <taxon>Alphaproteobacteria</taxon>
        <taxon>Hyphomicrobiales</taxon>
        <taxon>Brucellaceae</taxon>
        <taxon>Brucella/Ochrobactrum group</taxon>
        <taxon>Brucella</taxon>
    </lineage>
</organism>
<dbReference type="EMBL" id="AE008917">
    <property type="protein sequence ID" value="AAL51940.1"/>
    <property type="molecule type" value="Genomic_DNA"/>
</dbReference>
<dbReference type="PIR" id="AI3346">
    <property type="entry name" value="AI3346"/>
</dbReference>
<dbReference type="RefSeq" id="WP_004683926.1">
    <property type="nucleotide sequence ID" value="NZ_GG703780.1"/>
</dbReference>
<dbReference type="SMR" id="Q8YHN8"/>
<dbReference type="GeneID" id="29593564"/>
<dbReference type="KEGG" id="bme:BMEI0759"/>
<dbReference type="KEGG" id="bmel:DK63_663"/>
<dbReference type="PATRIC" id="fig|224914.52.peg.694"/>
<dbReference type="eggNOG" id="COG0089">
    <property type="taxonomic scope" value="Bacteria"/>
</dbReference>
<dbReference type="Proteomes" id="UP000000419">
    <property type="component" value="Chromosome I"/>
</dbReference>
<dbReference type="GO" id="GO:1990904">
    <property type="term" value="C:ribonucleoprotein complex"/>
    <property type="evidence" value="ECO:0007669"/>
    <property type="project" value="UniProtKB-KW"/>
</dbReference>
<dbReference type="GO" id="GO:0005840">
    <property type="term" value="C:ribosome"/>
    <property type="evidence" value="ECO:0007669"/>
    <property type="project" value="UniProtKB-KW"/>
</dbReference>
<dbReference type="GO" id="GO:0019843">
    <property type="term" value="F:rRNA binding"/>
    <property type="evidence" value="ECO:0007669"/>
    <property type="project" value="UniProtKB-UniRule"/>
</dbReference>
<dbReference type="GO" id="GO:0003735">
    <property type="term" value="F:structural constituent of ribosome"/>
    <property type="evidence" value="ECO:0007669"/>
    <property type="project" value="InterPro"/>
</dbReference>
<dbReference type="GO" id="GO:0006412">
    <property type="term" value="P:translation"/>
    <property type="evidence" value="ECO:0007669"/>
    <property type="project" value="UniProtKB-UniRule"/>
</dbReference>
<dbReference type="FunFam" id="3.30.70.330:FF:000001">
    <property type="entry name" value="50S ribosomal protein L23"/>
    <property type="match status" value="1"/>
</dbReference>
<dbReference type="Gene3D" id="3.30.70.330">
    <property type="match status" value="1"/>
</dbReference>
<dbReference type="HAMAP" id="MF_01369_B">
    <property type="entry name" value="Ribosomal_uL23_B"/>
    <property type="match status" value="1"/>
</dbReference>
<dbReference type="InterPro" id="IPR012677">
    <property type="entry name" value="Nucleotide-bd_a/b_plait_sf"/>
</dbReference>
<dbReference type="InterPro" id="IPR013025">
    <property type="entry name" value="Ribosomal_uL23-like"/>
</dbReference>
<dbReference type="InterPro" id="IPR012678">
    <property type="entry name" value="Ribosomal_uL23/eL15/eS24_sf"/>
</dbReference>
<dbReference type="NCBIfam" id="NF004359">
    <property type="entry name" value="PRK05738.1-3"/>
    <property type="match status" value="1"/>
</dbReference>
<dbReference type="NCBIfam" id="NF004360">
    <property type="entry name" value="PRK05738.1-5"/>
    <property type="match status" value="1"/>
</dbReference>
<dbReference type="NCBIfam" id="NF004363">
    <property type="entry name" value="PRK05738.2-4"/>
    <property type="match status" value="1"/>
</dbReference>
<dbReference type="NCBIfam" id="NF004366">
    <property type="entry name" value="PRK05738.3-2"/>
    <property type="match status" value="1"/>
</dbReference>
<dbReference type="PANTHER" id="PTHR11620">
    <property type="entry name" value="60S RIBOSOMAL PROTEIN L23A"/>
    <property type="match status" value="1"/>
</dbReference>
<dbReference type="Pfam" id="PF00276">
    <property type="entry name" value="Ribosomal_L23"/>
    <property type="match status" value="1"/>
</dbReference>
<dbReference type="SUPFAM" id="SSF54189">
    <property type="entry name" value="Ribosomal proteins S24e, L23 and L15e"/>
    <property type="match status" value="1"/>
</dbReference>
<evidence type="ECO:0000255" key="1">
    <source>
        <dbReference type="HAMAP-Rule" id="MF_01369"/>
    </source>
</evidence>
<evidence type="ECO:0000305" key="2"/>
<name>RL23_BRUME</name>
<proteinExistence type="inferred from homology"/>
<comment type="function">
    <text evidence="1">One of the early assembly proteins it binds 23S rRNA. One of the proteins that surrounds the polypeptide exit tunnel on the outside of the ribosome. Forms the main docking site for trigger factor binding to the ribosome.</text>
</comment>
<comment type="subunit">
    <text evidence="1">Part of the 50S ribosomal subunit. Contacts protein L29, and trigger factor when it is bound to the ribosome.</text>
</comment>
<comment type="similarity">
    <text evidence="1">Belongs to the universal ribosomal protein uL23 family.</text>
</comment>
<protein>
    <recommendedName>
        <fullName evidence="1">Large ribosomal subunit protein uL23</fullName>
    </recommendedName>
    <alternativeName>
        <fullName evidence="2">50S ribosomal protein L23</fullName>
    </alternativeName>
</protein>
<feature type="chain" id="PRO_0000272717" description="Large ribosomal subunit protein uL23">
    <location>
        <begin position="1"/>
        <end position="97"/>
    </location>
</feature>
<gene>
    <name evidence="1" type="primary">rplW</name>
    <name type="ordered locus">BMEI0759</name>
</gene>
<keyword id="KW-0687">Ribonucleoprotein</keyword>
<keyword id="KW-0689">Ribosomal protein</keyword>
<keyword id="KW-0694">RNA-binding</keyword>
<keyword id="KW-0699">rRNA-binding</keyword>
<accession>Q8YHN8</accession>